<name>CAF17_NEUCR</name>
<dbReference type="EMBL" id="CM002238">
    <property type="protein sequence ID" value="EAA28079.1"/>
    <property type="molecule type" value="Genomic_DNA"/>
</dbReference>
<dbReference type="RefSeq" id="XP_957315.1">
    <property type="nucleotide sequence ID" value="XM_952222.3"/>
</dbReference>
<dbReference type="SMR" id="Q7RYZ1"/>
<dbReference type="FunCoup" id="Q7RYZ1">
    <property type="interactions" value="271"/>
</dbReference>
<dbReference type="STRING" id="367110.Q7RYZ1"/>
<dbReference type="PaxDb" id="5141-EFNCRP00000006181"/>
<dbReference type="EnsemblFungi" id="EAA28079">
    <property type="protein sequence ID" value="EAA28079"/>
    <property type="gene ID" value="NCU06424"/>
</dbReference>
<dbReference type="GeneID" id="3873484"/>
<dbReference type="KEGG" id="ncr:NCU06424"/>
<dbReference type="VEuPathDB" id="FungiDB:NCU06424"/>
<dbReference type="HOGENOM" id="CLU_007884_7_0_1"/>
<dbReference type="InParanoid" id="Q7RYZ1"/>
<dbReference type="OMA" id="NMLVAND"/>
<dbReference type="OrthoDB" id="191995at2759"/>
<dbReference type="Proteomes" id="UP000001805">
    <property type="component" value="Chromosome 3, Linkage Group III"/>
</dbReference>
<dbReference type="GO" id="GO:0005759">
    <property type="term" value="C:mitochondrial matrix"/>
    <property type="evidence" value="ECO:0000318"/>
    <property type="project" value="GO_Central"/>
</dbReference>
<dbReference type="GO" id="GO:0016740">
    <property type="term" value="F:transferase activity"/>
    <property type="evidence" value="ECO:0007669"/>
    <property type="project" value="UniProtKB-KW"/>
</dbReference>
<dbReference type="GO" id="GO:0016226">
    <property type="term" value="P:iron-sulfur cluster assembly"/>
    <property type="evidence" value="ECO:0000318"/>
    <property type="project" value="GO_Central"/>
</dbReference>
<dbReference type="FunFam" id="3.30.1360.120:FF:000028">
    <property type="entry name" value="Putative transferase caf17, mitochondrial"/>
    <property type="match status" value="1"/>
</dbReference>
<dbReference type="Gene3D" id="3.30.1360.120">
    <property type="entry name" value="Probable tRNA modification gtpase trme, domain 1"/>
    <property type="match status" value="1"/>
</dbReference>
<dbReference type="InterPro" id="IPR006222">
    <property type="entry name" value="GCV_T_N"/>
</dbReference>
<dbReference type="InterPro" id="IPR027266">
    <property type="entry name" value="TrmE/GcvT_dom1"/>
</dbReference>
<dbReference type="InterPro" id="IPR045179">
    <property type="entry name" value="YgfZ/GcvT"/>
</dbReference>
<dbReference type="InterPro" id="IPR017703">
    <property type="entry name" value="YgfZ/GcvT_CS"/>
</dbReference>
<dbReference type="NCBIfam" id="TIGR03317">
    <property type="entry name" value="ygfZ_signature"/>
    <property type="match status" value="1"/>
</dbReference>
<dbReference type="PANTHER" id="PTHR22602">
    <property type="entry name" value="TRANSFERASE CAF17, MITOCHONDRIAL-RELATED"/>
    <property type="match status" value="1"/>
</dbReference>
<dbReference type="PANTHER" id="PTHR22602:SF0">
    <property type="entry name" value="TRANSFERASE CAF17, MITOCHONDRIAL-RELATED"/>
    <property type="match status" value="1"/>
</dbReference>
<dbReference type="Pfam" id="PF01571">
    <property type="entry name" value="GCV_T"/>
    <property type="match status" value="1"/>
</dbReference>
<dbReference type="SUPFAM" id="SSF103025">
    <property type="entry name" value="Folate-binding domain"/>
    <property type="match status" value="1"/>
</dbReference>
<proteinExistence type="inferred from homology"/>
<keyword id="KW-0496">Mitochondrion</keyword>
<keyword id="KW-1185">Reference proteome</keyword>
<keyword id="KW-0809">Transit peptide</keyword>
<comment type="subcellular location">
    <subcellularLocation>
        <location evidence="1">Mitochondrion matrix</location>
    </subcellularLocation>
</comment>
<comment type="similarity">
    <text evidence="3">Belongs to the GcvT family. CAF17/IBA57 subfamily.</text>
</comment>
<evidence type="ECO:0000250" key="1">
    <source>
        <dbReference type="UniProtKB" id="P47158"/>
    </source>
</evidence>
<evidence type="ECO:0000255" key="2"/>
<evidence type="ECO:0000305" key="3"/>
<reference key="1">
    <citation type="journal article" date="2003" name="Nature">
        <title>The genome sequence of the filamentous fungus Neurospora crassa.</title>
        <authorList>
            <person name="Galagan J.E."/>
            <person name="Calvo S.E."/>
            <person name="Borkovich K.A."/>
            <person name="Selker E.U."/>
            <person name="Read N.D."/>
            <person name="Jaffe D.B."/>
            <person name="FitzHugh W."/>
            <person name="Ma L.-J."/>
            <person name="Smirnov S."/>
            <person name="Purcell S."/>
            <person name="Rehman B."/>
            <person name="Elkins T."/>
            <person name="Engels R."/>
            <person name="Wang S."/>
            <person name="Nielsen C.B."/>
            <person name="Butler J."/>
            <person name="Endrizzi M."/>
            <person name="Qui D."/>
            <person name="Ianakiev P."/>
            <person name="Bell-Pedersen D."/>
            <person name="Nelson M.A."/>
            <person name="Werner-Washburne M."/>
            <person name="Selitrennikoff C.P."/>
            <person name="Kinsey J.A."/>
            <person name="Braun E.L."/>
            <person name="Zelter A."/>
            <person name="Schulte U."/>
            <person name="Kothe G.O."/>
            <person name="Jedd G."/>
            <person name="Mewes H.-W."/>
            <person name="Staben C."/>
            <person name="Marcotte E."/>
            <person name="Greenberg D."/>
            <person name="Roy A."/>
            <person name="Foley K."/>
            <person name="Naylor J."/>
            <person name="Stange-Thomann N."/>
            <person name="Barrett R."/>
            <person name="Gnerre S."/>
            <person name="Kamal M."/>
            <person name="Kamvysselis M."/>
            <person name="Mauceli E.W."/>
            <person name="Bielke C."/>
            <person name="Rudd S."/>
            <person name="Frishman D."/>
            <person name="Krystofova S."/>
            <person name="Rasmussen C."/>
            <person name="Metzenberg R.L."/>
            <person name="Perkins D.D."/>
            <person name="Kroken S."/>
            <person name="Cogoni C."/>
            <person name="Macino G."/>
            <person name="Catcheside D.E.A."/>
            <person name="Li W."/>
            <person name="Pratt R.J."/>
            <person name="Osmani S.A."/>
            <person name="DeSouza C.P.C."/>
            <person name="Glass N.L."/>
            <person name="Orbach M.J."/>
            <person name="Berglund J.A."/>
            <person name="Voelker R."/>
            <person name="Yarden O."/>
            <person name="Plamann M."/>
            <person name="Seiler S."/>
            <person name="Dunlap J.C."/>
            <person name="Radford A."/>
            <person name="Aramayo R."/>
            <person name="Natvig D.O."/>
            <person name="Alex L.A."/>
            <person name="Mannhaupt G."/>
            <person name="Ebbole D.J."/>
            <person name="Freitag M."/>
            <person name="Paulsen I."/>
            <person name="Sachs M.S."/>
            <person name="Lander E.S."/>
            <person name="Nusbaum C."/>
            <person name="Birren B.W."/>
        </authorList>
    </citation>
    <scope>NUCLEOTIDE SEQUENCE [LARGE SCALE GENOMIC DNA]</scope>
    <source>
        <strain>ATCC 24698 / 74-OR23-1A / CBS 708.71 / DSM 1257 / FGSC 987</strain>
    </source>
</reference>
<accession>Q7RYZ1</accession>
<protein>
    <recommendedName>
        <fullName>Iron-sulfur cluster assembly factor IBA57 homolog, mitochondrial</fullName>
    </recommendedName>
</protein>
<sequence length="439" mass="48363">MQPATRSIAVAGPASAALRTATTPFICLGCRSVQRKQQRRLFSSTVSTQTDLRAGLTKLTSRRLISVSGPDASKFLQGVITNNINAPHNANGFYTGFLTAQGRVVHDVIIYPDDLGPEPGKQSFLIEVDADEAATLHKHIKRYKLRSKFNLKLLDPEERALYHSWNDVDQAGPWTKLIDEVQNAGNARAVPDPRVPAFGSRVVVNQTSSSSPLTDGDLTPESSYHLRRFLLGIPEGQSEIISGTALPLESNMDVMNGIDFRKGCYVGQELTIRTKHRGVVRKRILPCILYYEGAAPEIPADGPGQLEALEKLLKPEVEQGVKAEMIPQGASIDKVDKKSRSAPGKWLRGIGNVGLALCRLEVMTDTVLPGETPGTYSPEQDFVVSLGGEEGSEVEAKKVKVKAFVPFWLKDVWRIEAEKAEEERRMREELLRDRGLDVE</sequence>
<organism>
    <name type="scientific">Neurospora crassa (strain ATCC 24698 / 74-OR23-1A / CBS 708.71 / DSM 1257 / FGSC 987)</name>
    <dbReference type="NCBI Taxonomy" id="367110"/>
    <lineage>
        <taxon>Eukaryota</taxon>
        <taxon>Fungi</taxon>
        <taxon>Dikarya</taxon>
        <taxon>Ascomycota</taxon>
        <taxon>Pezizomycotina</taxon>
        <taxon>Sordariomycetes</taxon>
        <taxon>Sordariomycetidae</taxon>
        <taxon>Sordariales</taxon>
        <taxon>Sordariaceae</taxon>
        <taxon>Neurospora</taxon>
    </lineage>
</organism>
<feature type="transit peptide" description="Mitochondrion" evidence="2">
    <location>
        <begin position="1"/>
        <end position="72"/>
    </location>
</feature>
<feature type="chain" id="PRO_0000301704" description="Iron-sulfur cluster assembly factor IBA57 homolog, mitochondrial">
    <location>
        <begin position="73"/>
        <end position="439"/>
    </location>
</feature>
<gene>
    <name type="primary">caf-17</name>
    <name type="ORF">NCU06424</name>
</gene>